<keyword id="KW-1185">Reference proteome</keyword>
<dbReference type="EMBL" id="AE014075">
    <property type="protein sequence ID" value="AAN82171.1"/>
    <property type="molecule type" value="Genomic_DNA"/>
</dbReference>
<dbReference type="RefSeq" id="WP_000334896.1">
    <property type="nucleotide sequence ID" value="NZ_CP051263.1"/>
</dbReference>
<dbReference type="SMR" id="P0AAM8"/>
<dbReference type="STRING" id="199310.c3727"/>
<dbReference type="GeneID" id="93778995"/>
<dbReference type="KEGG" id="ecc:c3727"/>
<dbReference type="eggNOG" id="COG0298">
    <property type="taxonomic scope" value="Bacteria"/>
</dbReference>
<dbReference type="HOGENOM" id="CLU_159381_1_1_6"/>
<dbReference type="BioCyc" id="ECOL199310:C3727-MONOMER"/>
<dbReference type="UniPathway" id="UPA00335"/>
<dbReference type="Proteomes" id="UP000001410">
    <property type="component" value="Chromosome"/>
</dbReference>
<dbReference type="GO" id="GO:1902670">
    <property type="term" value="F:carbon dioxide binding"/>
    <property type="evidence" value="ECO:0007669"/>
    <property type="project" value="TreeGrafter"/>
</dbReference>
<dbReference type="GO" id="GO:0005506">
    <property type="term" value="F:iron ion binding"/>
    <property type="evidence" value="ECO:0007669"/>
    <property type="project" value="TreeGrafter"/>
</dbReference>
<dbReference type="GO" id="GO:0051604">
    <property type="term" value="P:protein maturation"/>
    <property type="evidence" value="ECO:0007669"/>
    <property type="project" value="TreeGrafter"/>
</dbReference>
<dbReference type="FunFam" id="2.30.30.140:FF:000022">
    <property type="entry name" value="Hydrogenase assembly chaperone HybG"/>
    <property type="match status" value="1"/>
</dbReference>
<dbReference type="Gene3D" id="2.30.30.140">
    <property type="match status" value="1"/>
</dbReference>
<dbReference type="InterPro" id="IPR019812">
    <property type="entry name" value="Hydgase_assmbl_chp_CS"/>
</dbReference>
<dbReference type="InterPro" id="IPR001109">
    <property type="entry name" value="Hydrogenase_HupF/HypC"/>
</dbReference>
<dbReference type="NCBIfam" id="TIGR00074">
    <property type="entry name" value="hypC_hupF"/>
    <property type="match status" value="1"/>
</dbReference>
<dbReference type="NCBIfam" id="NF007721">
    <property type="entry name" value="PRK10413.1"/>
    <property type="match status" value="1"/>
</dbReference>
<dbReference type="PANTHER" id="PTHR35177">
    <property type="entry name" value="HYDROGENASE MATURATION FACTOR HYBG"/>
    <property type="match status" value="1"/>
</dbReference>
<dbReference type="PANTHER" id="PTHR35177:SF2">
    <property type="entry name" value="HYDROGENASE MATURATION FACTOR HYBG"/>
    <property type="match status" value="1"/>
</dbReference>
<dbReference type="Pfam" id="PF01455">
    <property type="entry name" value="HupF_HypC"/>
    <property type="match status" value="1"/>
</dbReference>
<dbReference type="PRINTS" id="PR00445">
    <property type="entry name" value="HUPFHYPC"/>
</dbReference>
<dbReference type="SUPFAM" id="SSF159127">
    <property type="entry name" value="HupF/HypC-like"/>
    <property type="match status" value="1"/>
</dbReference>
<dbReference type="PROSITE" id="PS01097">
    <property type="entry name" value="HUPF_HYPC"/>
    <property type="match status" value="1"/>
</dbReference>
<organism>
    <name type="scientific">Escherichia coli O6:H1 (strain CFT073 / ATCC 700928 / UPEC)</name>
    <dbReference type="NCBI Taxonomy" id="199310"/>
    <lineage>
        <taxon>Bacteria</taxon>
        <taxon>Pseudomonadati</taxon>
        <taxon>Pseudomonadota</taxon>
        <taxon>Gammaproteobacteria</taxon>
        <taxon>Enterobacterales</taxon>
        <taxon>Enterobacteriaceae</taxon>
        <taxon>Escherichia</taxon>
    </lineage>
</organism>
<reference key="1">
    <citation type="journal article" date="2002" name="Proc. Natl. Acad. Sci. U.S.A.">
        <title>Extensive mosaic structure revealed by the complete genome sequence of uropathogenic Escherichia coli.</title>
        <authorList>
            <person name="Welch R.A."/>
            <person name="Burland V."/>
            <person name="Plunkett G. III"/>
            <person name="Redford P."/>
            <person name="Roesch P."/>
            <person name="Rasko D."/>
            <person name="Buckles E.L."/>
            <person name="Liou S.-R."/>
            <person name="Boutin A."/>
            <person name="Hackett J."/>
            <person name="Stroud D."/>
            <person name="Mayhew G.F."/>
            <person name="Rose D.J."/>
            <person name="Zhou S."/>
            <person name="Schwartz D.C."/>
            <person name="Perna N.T."/>
            <person name="Mobley H.L.T."/>
            <person name="Donnenberg M.S."/>
            <person name="Blattner F.R."/>
        </authorList>
    </citation>
    <scope>NUCLEOTIDE SEQUENCE [LARGE SCALE GENOMIC DNA]</scope>
    <source>
        <strain>CFT073 / ATCC 700928 / UPEC</strain>
    </source>
</reference>
<comment type="function">
    <text evidence="2">Involved in the maturation of [NiFe] hydrogenases. Involved in the biosynthesis of the Fe(CN)(2)CO cofactor. HybG delivers iron-bound CO(2) to HypD where reduction to CO probably occurs. In complex with HypD, accepts the cyanide ligand generated by HypF and HypE, and also coordinates the carbon monoxide ligand.</text>
</comment>
<comment type="pathway">
    <text evidence="2">Protein modification; [NiFe] hydrogenase maturation.</text>
</comment>
<comment type="similarity">
    <text evidence="3">Belongs to the HupF/HypC family.</text>
</comment>
<accession>P0AAM8</accession>
<accession>P37185</accession>
<name>HYBG_ECOL6</name>
<proteinExistence type="inferred from homology"/>
<sequence>MCIGVPGQVLAVGEDIHQLAQVEVCGIKRDVNIALICEGNPADLLGQWVLVHVGFAMSIIDEDEAKATLDALRQMDYDITSA</sequence>
<feature type="chain" id="PRO_0000201405" description="Hydrogenase maturation factor HybG">
    <location>
        <begin position="1"/>
        <end position="82"/>
    </location>
</feature>
<feature type="site" description="Important for interaction with HypD and the precursor form of hydrogenase" evidence="1">
    <location>
        <position position="2"/>
    </location>
</feature>
<gene>
    <name type="primary">hybG</name>
    <name type="ordered locus">c3727</name>
</gene>
<protein>
    <recommendedName>
        <fullName evidence="2">Hydrogenase maturation factor HybG</fullName>
    </recommendedName>
</protein>
<evidence type="ECO:0000250" key="1">
    <source>
        <dbReference type="UniProtKB" id="P0AAM3"/>
    </source>
</evidence>
<evidence type="ECO:0000250" key="2">
    <source>
        <dbReference type="UniProtKB" id="P0AAM7"/>
    </source>
</evidence>
<evidence type="ECO:0000305" key="3"/>